<keyword id="KW-0067">ATP-binding</keyword>
<keyword id="KW-0963">Cytoplasm</keyword>
<keyword id="KW-0418">Kinase</keyword>
<keyword id="KW-0460">Magnesium</keyword>
<keyword id="KW-0479">Metal-binding</keyword>
<keyword id="KW-0546">Nucleotide metabolism</keyword>
<keyword id="KW-0547">Nucleotide-binding</keyword>
<keyword id="KW-0597">Phosphoprotein</keyword>
<keyword id="KW-1185">Reference proteome</keyword>
<keyword id="KW-0808">Transferase</keyword>
<name>NDK_PYRFU</name>
<comment type="function">
    <text evidence="1">Major role in the synthesis of nucleoside triphosphates other than ATP. The ATP gamma phosphate is transferred to the NDP beta phosphate via a ping-pong mechanism, using a phosphorylated active-site intermediate.</text>
</comment>
<comment type="catalytic activity">
    <reaction evidence="1">
        <text>a 2'-deoxyribonucleoside 5'-diphosphate + ATP = a 2'-deoxyribonucleoside 5'-triphosphate + ADP</text>
        <dbReference type="Rhea" id="RHEA:44640"/>
        <dbReference type="ChEBI" id="CHEBI:30616"/>
        <dbReference type="ChEBI" id="CHEBI:61560"/>
        <dbReference type="ChEBI" id="CHEBI:73316"/>
        <dbReference type="ChEBI" id="CHEBI:456216"/>
        <dbReference type="EC" id="2.7.4.6"/>
    </reaction>
</comment>
<comment type="catalytic activity">
    <reaction evidence="1">
        <text>a ribonucleoside 5'-diphosphate + ATP = a ribonucleoside 5'-triphosphate + ADP</text>
        <dbReference type="Rhea" id="RHEA:18113"/>
        <dbReference type="ChEBI" id="CHEBI:30616"/>
        <dbReference type="ChEBI" id="CHEBI:57930"/>
        <dbReference type="ChEBI" id="CHEBI:61557"/>
        <dbReference type="ChEBI" id="CHEBI:456216"/>
        <dbReference type="EC" id="2.7.4.6"/>
    </reaction>
</comment>
<comment type="cofactor">
    <cofactor evidence="1">
        <name>Mg(2+)</name>
        <dbReference type="ChEBI" id="CHEBI:18420"/>
    </cofactor>
</comment>
<comment type="subcellular location">
    <subcellularLocation>
        <location evidence="1">Cytoplasm</location>
    </subcellularLocation>
</comment>
<comment type="similarity">
    <text evidence="1">Belongs to the NDK family.</text>
</comment>
<dbReference type="EC" id="2.7.4.6" evidence="1"/>
<dbReference type="EMBL" id="AE009950">
    <property type="protein sequence ID" value="AAL81055.1"/>
    <property type="molecule type" value="Genomic_DNA"/>
</dbReference>
<dbReference type="RefSeq" id="WP_011012067.1">
    <property type="nucleotide sequence ID" value="NZ_CP023154.1"/>
</dbReference>
<dbReference type="SMR" id="Q8U2A8"/>
<dbReference type="STRING" id="186497.PF0931"/>
<dbReference type="PaxDb" id="186497-PF0931"/>
<dbReference type="GeneID" id="41712741"/>
<dbReference type="KEGG" id="pfu:PF0931"/>
<dbReference type="PATRIC" id="fig|186497.12.peg.986"/>
<dbReference type="eggNOG" id="arCOG04313">
    <property type="taxonomic scope" value="Archaea"/>
</dbReference>
<dbReference type="HOGENOM" id="CLU_060216_6_3_2"/>
<dbReference type="OrthoDB" id="6874at2157"/>
<dbReference type="PhylomeDB" id="Q8U2A8"/>
<dbReference type="Proteomes" id="UP000001013">
    <property type="component" value="Chromosome"/>
</dbReference>
<dbReference type="GO" id="GO:0005737">
    <property type="term" value="C:cytoplasm"/>
    <property type="evidence" value="ECO:0007669"/>
    <property type="project" value="UniProtKB-SubCell"/>
</dbReference>
<dbReference type="GO" id="GO:0005524">
    <property type="term" value="F:ATP binding"/>
    <property type="evidence" value="ECO:0007669"/>
    <property type="project" value="UniProtKB-UniRule"/>
</dbReference>
<dbReference type="GO" id="GO:0046872">
    <property type="term" value="F:metal ion binding"/>
    <property type="evidence" value="ECO:0007669"/>
    <property type="project" value="UniProtKB-KW"/>
</dbReference>
<dbReference type="GO" id="GO:0004550">
    <property type="term" value="F:nucleoside diphosphate kinase activity"/>
    <property type="evidence" value="ECO:0007669"/>
    <property type="project" value="UniProtKB-UniRule"/>
</dbReference>
<dbReference type="GO" id="GO:0006241">
    <property type="term" value="P:CTP biosynthetic process"/>
    <property type="evidence" value="ECO:0007669"/>
    <property type="project" value="UniProtKB-UniRule"/>
</dbReference>
<dbReference type="GO" id="GO:0006183">
    <property type="term" value="P:GTP biosynthetic process"/>
    <property type="evidence" value="ECO:0007669"/>
    <property type="project" value="UniProtKB-UniRule"/>
</dbReference>
<dbReference type="GO" id="GO:0006228">
    <property type="term" value="P:UTP biosynthetic process"/>
    <property type="evidence" value="ECO:0007669"/>
    <property type="project" value="UniProtKB-UniRule"/>
</dbReference>
<dbReference type="CDD" id="cd04413">
    <property type="entry name" value="NDPk_I"/>
    <property type="match status" value="1"/>
</dbReference>
<dbReference type="FunFam" id="3.30.70.141:FF:000003">
    <property type="entry name" value="Nucleoside diphosphate kinase"/>
    <property type="match status" value="1"/>
</dbReference>
<dbReference type="Gene3D" id="3.30.70.141">
    <property type="entry name" value="Nucleoside diphosphate kinase-like domain"/>
    <property type="match status" value="1"/>
</dbReference>
<dbReference type="HAMAP" id="MF_00451">
    <property type="entry name" value="NDP_kinase"/>
    <property type="match status" value="1"/>
</dbReference>
<dbReference type="InterPro" id="IPR034907">
    <property type="entry name" value="NDK-like_dom"/>
</dbReference>
<dbReference type="InterPro" id="IPR036850">
    <property type="entry name" value="NDK-like_dom_sf"/>
</dbReference>
<dbReference type="InterPro" id="IPR001564">
    <property type="entry name" value="Nucleoside_diP_kinase"/>
</dbReference>
<dbReference type="InterPro" id="IPR023005">
    <property type="entry name" value="Nucleoside_diP_kinase_AS"/>
</dbReference>
<dbReference type="NCBIfam" id="NF001908">
    <property type="entry name" value="PRK00668.1"/>
    <property type="match status" value="1"/>
</dbReference>
<dbReference type="PANTHER" id="PTHR11349">
    <property type="entry name" value="NUCLEOSIDE DIPHOSPHATE KINASE"/>
    <property type="match status" value="1"/>
</dbReference>
<dbReference type="Pfam" id="PF00334">
    <property type="entry name" value="NDK"/>
    <property type="match status" value="1"/>
</dbReference>
<dbReference type="PRINTS" id="PR01243">
    <property type="entry name" value="NUCDPKINASE"/>
</dbReference>
<dbReference type="SMART" id="SM00562">
    <property type="entry name" value="NDK"/>
    <property type="match status" value="1"/>
</dbReference>
<dbReference type="SUPFAM" id="SSF54919">
    <property type="entry name" value="Nucleoside diphosphate kinase, NDK"/>
    <property type="match status" value="1"/>
</dbReference>
<dbReference type="PROSITE" id="PS00469">
    <property type="entry name" value="NDPK"/>
    <property type="match status" value="1"/>
</dbReference>
<dbReference type="PROSITE" id="PS51374">
    <property type="entry name" value="NDPK_LIKE"/>
    <property type="match status" value="1"/>
</dbReference>
<reference key="1">
    <citation type="journal article" date="1999" name="Genetics">
        <title>Divergence of the hyperthermophilic archaea Pyrococcus furiosus and P. horikoshii inferred from complete genomic sequences.</title>
        <authorList>
            <person name="Maeder D.L."/>
            <person name="Weiss R.B."/>
            <person name="Dunn D.M."/>
            <person name="Cherry J.L."/>
            <person name="Gonzalez J.M."/>
            <person name="DiRuggiero J."/>
            <person name="Robb F.T."/>
        </authorList>
    </citation>
    <scope>NUCLEOTIDE SEQUENCE [LARGE SCALE GENOMIC DNA]</scope>
    <source>
        <strain>ATCC 43587 / DSM 3638 / JCM 8422 / Vc1</strain>
    </source>
</reference>
<accession>Q8U2A8</accession>
<sequence length="161" mass="18391">MNEVERTLVIIKPDAVVRGLIGEIISRFEKKGLKIVGMKMIWIDRELAEKHYEEHKGKPFFEALIDYITKAPVVVMVVEGRYAVEVVRKMAGATDPKDAAPGTIRGDYGLDIGDAIYNVIHASDSKESAEREISLYFKPEEIYEYCKAADWFYREKKQAKC</sequence>
<gene>
    <name evidence="1" type="primary">ndk</name>
    <name type="ordered locus">PF0931</name>
</gene>
<proteinExistence type="inferred from homology"/>
<evidence type="ECO:0000255" key="1">
    <source>
        <dbReference type="HAMAP-Rule" id="MF_00451"/>
    </source>
</evidence>
<organism>
    <name type="scientific">Pyrococcus furiosus (strain ATCC 43587 / DSM 3638 / JCM 8422 / Vc1)</name>
    <dbReference type="NCBI Taxonomy" id="186497"/>
    <lineage>
        <taxon>Archaea</taxon>
        <taxon>Methanobacteriati</taxon>
        <taxon>Methanobacteriota</taxon>
        <taxon>Thermococci</taxon>
        <taxon>Thermococcales</taxon>
        <taxon>Thermococcaceae</taxon>
        <taxon>Pyrococcus</taxon>
    </lineage>
</organism>
<protein>
    <recommendedName>
        <fullName evidence="1">Nucleoside diphosphate kinase</fullName>
        <shortName evidence="1">NDK</shortName>
        <shortName evidence="1">NDP kinase</shortName>
        <ecNumber evidence="1">2.7.4.6</ecNumber>
    </recommendedName>
    <alternativeName>
        <fullName evidence="1">Nucleoside-2-P kinase</fullName>
    </alternativeName>
</protein>
<feature type="chain" id="PRO_0000137098" description="Nucleoside diphosphate kinase">
    <location>
        <begin position="1"/>
        <end position="161"/>
    </location>
</feature>
<feature type="active site" description="Pros-phosphohistidine intermediate" evidence="1">
    <location>
        <position position="121"/>
    </location>
</feature>
<feature type="binding site" evidence="1">
    <location>
        <position position="12"/>
    </location>
    <ligand>
        <name>ATP</name>
        <dbReference type="ChEBI" id="CHEBI:30616"/>
    </ligand>
</feature>
<feature type="binding site" evidence="1">
    <location>
        <position position="60"/>
    </location>
    <ligand>
        <name>ATP</name>
        <dbReference type="ChEBI" id="CHEBI:30616"/>
    </ligand>
</feature>
<feature type="binding site" evidence="1">
    <location>
        <position position="88"/>
    </location>
    <ligand>
        <name>ATP</name>
        <dbReference type="ChEBI" id="CHEBI:30616"/>
    </ligand>
</feature>
<feature type="binding site" evidence="1">
    <location>
        <position position="94"/>
    </location>
    <ligand>
        <name>ATP</name>
        <dbReference type="ChEBI" id="CHEBI:30616"/>
    </ligand>
</feature>
<feature type="binding site" evidence="1">
    <location>
        <position position="105"/>
    </location>
    <ligand>
        <name>ATP</name>
        <dbReference type="ChEBI" id="CHEBI:30616"/>
    </ligand>
</feature>